<comment type="function">
    <text evidence="1">Glucagon plays a key role in glucose metabolism and homeostasis. Regulates blood glucose by increasing gluconeogenesis and decreasing glycolysis (By similarity).</text>
</comment>
<comment type="subcellular location">
    <subcellularLocation>
        <location evidence="1">Secreted</location>
    </subcellularLocation>
</comment>
<comment type="induction">
    <text evidence="1">Produced in the A cells of the islets of Langerhans in response to a drop in blood sugar concentration.</text>
</comment>
<comment type="similarity">
    <text evidence="3">Belongs to the glucagon family.</text>
</comment>
<reference key="1">
    <citation type="journal article" date="1972" name="Horm. Metab. Res.">
        <title>Rabbit glucagon: isolation, crystallization and amino acid composition.</title>
        <authorList>
            <person name="Sundby F."/>
            <person name="Markussen J."/>
        </authorList>
    </citation>
    <scope>PROTEIN SEQUENCE</scope>
</reference>
<protein>
    <recommendedName>
        <fullName>Glucagon</fullName>
    </recommendedName>
</protein>
<evidence type="ECO:0000250" key="1"/>
<evidence type="ECO:0000250" key="2">
    <source>
        <dbReference type="UniProtKB" id="P55095"/>
    </source>
</evidence>
<evidence type="ECO:0000305" key="3"/>
<keyword id="KW-0903">Direct protein sequencing</keyword>
<keyword id="KW-0372">Hormone</keyword>
<keyword id="KW-0597">Phosphoprotein</keyword>
<keyword id="KW-1185">Reference proteome</keyword>
<keyword id="KW-0964">Secreted</keyword>
<name>GLUC_RABIT</name>
<organism>
    <name type="scientific">Oryctolagus cuniculus</name>
    <name type="common">Rabbit</name>
    <dbReference type="NCBI Taxonomy" id="9986"/>
    <lineage>
        <taxon>Eukaryota</taxon>
        <taxon>Metazoa</taxon>
        <taxon>Chordata</taxon>
        <taxon>Craniata</taxon>
        <taxon>Vertebrata</taxon>
        <taxon>Euteleostomi</taxon>
        <taxon>Mammalia</taxon>
        <taxon>Eutheria</taxon>
        <taxon>Euarchontoglires</taxon>
        <taxon>Glires</taxon>
        <taxon>Lagomorpha</taxon>
        <taxon>Leporidae</taxon>
        <taxon>Oryctolagus</taxon>
    </lineage>
</organism>
<feature type="peptide" id="PRO_0000043919" description="Glucagon">
    <location>
        <begin position="1"/>
        <end position="29"/>
    </location>
</feature>
<feature type="modified residue" description="Phosphoserine" evidence="2">
    <location>
        <position position="2"/>
    </location>
</feature>
<dbReference type="PIR" id="A91741">
    <property type="entry name" value="A91741"/>
</dbReference>
<dbReference type="BMRB" id="P68274"/>
<dbReference type="SMR" id="P68274"/>
<dbReference type="STRING" id="9986.ENSOCUP00000019727"/>
<dbReference type="PaxDb" id="9986-ENSOCUP00000019727"/>
<dbReference type="eggNOG" id="ENOG502RYPR">
    <property type="taxonomic scope" value="Eukaryota"/>
</dbReference>
<dbReference type="InParanoid" id="P68274"/>
<dbReference type="Proteomes" id="UP000001811">
    <property type="component" value="Unplaced"/>
</dbReference>
<dbReference type="GO" id="GO:0005615">
    <property type="term" value="C:extracellular space"/>
    <property type="evidence" value="ECO:0007669"/>
    <property type="project" value="TreeGrafter"/>
</dbReference>
<dbReference type="GO" id="GO:0031769">
    <property type="term" value="F:glucagon receptor binding"/>
    <property type="evidence" value="ECO:0007669"/>
    <property type="project" value="TreeGrafter"/>
</dbReference>
<dbReference type="GO" id="GO:0005179">
    <property type="term" value="F:hormone activity"/>
    <property type="evidence" value="ECO:0007669"/>
    <property type="project" value="UniProtKB-KW"/>
</dbReference>
<dbReference type="GO" id="GO:0007188">
    <property type="term" value="P:adenylate cyclase-modulating G protein-coupled receptor signaling pathway"/>
    <property type="evidence" value="ECO:0007669"/>
    <property type="project" value="TreeGrafter"/>
</dbReference>
<dbReference type="GO" id="GO:0043066">
    <property type="term" value="P:negative regulation of apoptotic process"/>
    <property type="evidence" value="ECO:0007669"/>
    <property type="project" value="TreeGrafter"/>
</dbReference>
<dbReference type="GO" id="GO:0035774">
    <property type="term" value="P:positive regulation of insulin secretion involved in cellular response to glucose stimulus"/>
    <property type="evidence" value="ECO:0007669"/>
    <property type="project" value="TreeGrafter"/>
</dbReference>
<dbReference type="GO" id="GO:0010737">
    <property type="term" value="P:protein kinase A signaling"/>
    <property type="evidence" value="ECO:0007669"/>
    <property type="project" value="TreeGrafter"/>
</dbReference>
<dbReference type="Gene3D" id="6.10.250.590">
    <property type="match status" value="1"/>
</dbReference>
<dbReference type="InterPro" id="IPR015550">
    <property type="entry name" value="Glucagon"/>
</dbReference>
<dbReference type="InterPro" id="IPR000532">
    <property type="entry name" value="Glucagon_GIP_secretin_VIP"/>
</dbReference>
<dbReference type="PANTHER" id="PTHR11418">
    <property type="entry name" value="GLUCAGON"/>
    <property type="match status" value="1"/>
</dbReference>
<dbReference type="PANTHER" id="PTHR11418:SF0">
    <property type="entry name" value="PRO-GLUCAGON"/>
    <property type="match status" value="1"/>
</dbReference>
<dbReference type="Pfam" id="PF00123">
    <property type="entry name" value="Hormone_2"/>
    <property type="match status" value="1"/>
</dbReference>
<dbReference type="PRINTS" id="PR00275">
    <property type="entry name" value="GLUCAGON"/>
</dbReference>
<dbReference type="SMART" id="SM00070">
    <property type="entry name" value="GLUCA"/>
    <property type="match status" value="1"/>
</dbReference>
<dbReference type="PROSITE" id="PS00260">
    <property type="entry name" value="GLUCAGON"/>
    <property type="match status" value="1"/>
</dbReference>
<accession>P68274</accession>
<accession>P25449</accession>
<sequence>HSQGTFTSDYSKYLDSRRAQDFVQWLMNT</sequence>
<gene>
    <name type="primary">GCG</name>
</gene>
<proteinExistence type="evidence at protein level"/>